<proteinExistence type="evidence at protein level"/>
<accession>B0TZW0</accession>
<organism>
    <name type="scientific">Francisella philomiragia subsp. philomiragia (strain ATCC 25017 / CCUG 19701 / FSC 153 / O#319-036)</name>
    <dbReference type="NCBI Taxonomy" id="484022"/>
    <lineage>
        <taxon>Bacteria</taxon>
        <taxon>Pseudomonadati</taxon>
        <taxon>Pseudomonadota</taxon>
        <taxon>Gammaproteobacteria</taxon>
        <taxon>Thiotrichales</taxon>
        <taxon>Francisellaceae</taxon>
        <taxon>Francisella</taxon>
    </lineage>
</organism>
<evidence type="ECO:0000269" key="1">
    <source>
    </source>
</evidence>
<evidence type="ECO:0000305" key="2"/>
<evidence type="ECO:0007829" key="3">
    <source>
        <dbReference type="PDB" id="3R0U"/>
    </source>
</evidence>
<keyword id="KW-0002">3D-structure</keyword>
<keyword id="KW-0413">Isomerase</keyword>
<keyword id="KW-0460">Magnesium</keyword>
<keyword id="KW-0479">Metal-binding</keyword>
<name>XEEP_FRAP2</name>
<sequence length="356" mass="39071">MSKIIDIKTSIIKIPLKRTFITAVRSTNHIDSLAVELTLDNGVKGYGVAPATTAITGDTLQGMQYIIREIFAPVILGSDLSDYKQTLELAFKKVMFNSAAKMAIDLAYHDLLAKEQDISVAKLLGAKANSIVTDVSISCGNVAETIQNIQNGVEANFTAIKVKTGADFNRDIQLLKALDNEFSKNIKFRFDANQGWNLAQTKQFIEEINKYSLNVEIIEQPVKYYDIKAMAEITKFSNIPVVADESVFDAKDAERVIDEQACNMINIKLAKTGGILEAQKIKKLADSAGISCMVGCMMESPAGILATASFALAEDITVADLDPLDWVAKDLYSDYITFNEPNIILKDNLKGFGFNL</sequence>
<comment type="function">
    <text evidence="1">Catalyzes the epimerization of dipeptides with L-Glu in the second position. Has epimerase activity with L-Ala-L-Glu, L-Pro-L-Glu, L-Val-L-Glu, L-Thr-L-Glu and L-Met-L-Glu (in vitro).</text>
</comment>
<comment type="cofactor">
    <cofactor evidence="1">
        <name>Mg(2+)</name>
        <dbReference type="ChEBI" id="CHEBI:18420"/>
    </cofactor>
    <text evidence="1">Binds 1 Mg(2+) ion per subunit.</text>
</comment>
<comment type="miscellaneous">
    <text>Part of a large, functionally divergent protein family. Protein modeling and substrate docking was used to predict the substrate specificity, prior to biochemical analysis.</text>
</comment>
<comment type="similarity">
    <text evidence="2">Belongs to the mandelate racemase/muconate lactonizing enzyme family.</text>
</comment>
<dbReference type="EC" id="5.1.1.-"/>
<dbReference type="EMBL" id="CP000937">
    <property type="protein sequence ID" value="ABZ87872.1"/>
    <property type="molecule type" value="Genomic_DNA"/>
</dbReference>
<dbReference type="PDB" id="3R0K">
    <property type="method" value="X-ray"/>
    <property type="resolution" value="2.00 A"/>
    <property type="chains" value="A/B=2-356"/>
</dbReference>
<dbReference type="PDB" id="3R0U">
    <property type="method" value="X-ray"/>
    <property type="resolution" value="1.90 A"/>
    <property type="chains" value="A/B=2-356"/>
</dbReference>
<dbReference type="PDB" id="3R10">
    <property type="method" value="X-ray"/>
    <property type="resolution" value="2.00 A"/>
    <property type="chains" value="A/B=2-356"/>
</dbReference>
<dbReference type="PDB" id="3R11">
    <property type="method" value="X-ray"/>
    <property type="resolution" value="2.00 A"/>
    <property type="chains" value="A/B=2-356"/>
</dbReference>
<dbReference type="PDB" id="3R1Z">
    <property type="method" value="X-ray"/>
    <property type="resolution" value="1.90 A"/>
    <property type="chains" value="A/B=2-356"/>
</dbReference>
<dbReference type="PDBsum" id="3R0K"/>
<dbReference type="PDBsum" id="3R0U"/>
<dbReference type="PDBsum" id="3R10"/>
<dbReference type="PDBsum" id="3R11"/>
<dbReference type="PDBsum" id="3R1Z"/>
<dbReference type="SMR" id="B0TZW0"/>
<dbReference type="KEGG" id="fph:Fphi_1647"/>
<dbReference type="eggNOG" id="COG4948">
    <property type="taxonomic scope" value="Bacteria"/>
</dbReference>
<dbReference type="HOGENOM" id="CLU_030273_4_0_6"/>
<dbReference type="EvolutionaryTrace" id="B0TZW0"/>
<dbReference type="GO" id="GO:0000287">
    <property type="term" value="F:magnesium ion binding"/>
    <property type="evidence" value="ECO:0000314"/>
    <property type="project" value="UniProtKB"/>
</dbReference>
<dbReference type="GO" id="GO:0016854">
    <property type="term" value="F:racemase and epimerase activity"/>
    <property type="evidence" value="ECO:0000314"/>
    <property type="project" value="UniProtKB"/>
</dbReference>
<dbReference type="GO" id="GO:0016855">
    <property type="term" value="F:racemase and epimerase activity, acting on amino acids and derivatives"/>
    <property type="evidence" value="ECO:0007669"/>
    <property type="project" value="InterPro"/>
</dbReference>
<dbReference type="GO" id="GO:0006518">
    <property type="term" value="P:peptide metabolic process"/>
    <property type="evidence" value="ECO:0000314"/>
    <property type="project" value="UniProtKB"/>
</dbReference>
<dbReference type="CDD" id="cd03319">
    <property type="entry name" value="L-Ala-DL-Glu_epimerase"/>
    <property type="match status" value="1"/>
</dbReference>
<dbReference type="FunFam" id="3.30.390.10:FF:000009">
    <property type="entry name" value="Hydrophobic dipeptide epimerase"/>
    <property type="match status" value="1"/>
</dbReference>
<dbReference type="Gene3D" id="3.20.20.120">
    <property type="entry name" value="Enolase-like C-terminal domain"/>
    <property type="match status" value="1"/>
</dbReference>
<dbReference type="Gene3D" id="3.30.390.10">
    <property type="entry name" value="Enolase-like, N-terminal domain"/>
    <property type="match status" value="1"/>
</dbReference>
<dbReference type="InterPro" id="IPR034603">
    <property type="entry name" value="Dipeptide_epimerase"/>
</dbReference>
<dbReference type="InterPro" id="IPR036849">
    <property type="entry name" value="Enolase-like_C_sf"/>
</dbReference>
<dbReference type="InterPro" id="IPR029017">
    <property type="entry name" value="Enolase-like_N"/>
</dbReference>
<dbReference type="InterPro" id="IPR029065">
    <property type="entry name" value="Enolase_C-like"/>
</dbReference>
<dbReference type="InterPro" id="IPR013342">
    <property type="entry name" value="Mandelate_racemase_C"/>
</dbReference>
<dbReference type="InterPro" id="IPR013341">
    <property type="entry name" value="Mandelate_racemase_N_dom"/>
</dbReference>
<dbReference type="PANTHER" id="PTHR48073:SF2">
    <property type="entry name" value="O-SUCCINYLBENZOATE SYNTHASE"/>
    <property type="match status" value="1"/>
</dbReference>
<dbReference type="PANTHER" id="PTHR48073">
    <property type="entry name" value="O-SUCCINYLBENZOATE SYNTHASE-RELATED"/>
    <property type="match status" value="1"/>
</dbReference>
<dbReference type="Pfam" id="PF13378">
    <property type="entry name" value="MR_MLE_C"/>
    <property type="match status" value="1"/>
</dbReference>
<dbReference type="Pfam" id="PF02746">
    <property type="entry name" value="MR_MLE_N"/>
    <property type="match status" value="1"/>
</dbReference>
<dbReference type="SFLD" id="SFLDS00001">
    <property type="entry name" value="Enolase"/>
    <property type="match status" value="1"/>
</dbReference>
<dbReference type="SFLD" id="SFLDF00009">
    <property type="entry name" value="o-succinylbenzoate_synthase"/>
    <property type="match status" value="1"/>
</dbReference>
<dbReference type="SMART" id="SM00922">
    <property type="entry name" value="MR_MLE"/>
    <property type="match status" value="1"/>
</dbReference>
<dbReference type="SUPFAM" id="SSF51604">
    <property type="entry name" value="Enolase C-terminal domain-like"/>
    <property type="match status" value="1"/>
</dbReference>
<dbReference type="SUPFAM" id="SSF54826">
    <property type="entry name" value="Enolase N-terminal domain-like"/>
    <property type="match status" value="1"/>
</dbReference>
<gene>
    <name type="ordered locus">Fphi_1647</name>
</gene>
<reference key="1">
    <citation type="submission" date="2007-12" db="EMBL/GenBank/DDBJ databases">
        <title>Complete sequence of chromosome of Francisella philomiragia subsp. philomiragia ATCC 25017.</title>
        <authorList>
            <consortium name="US DOE Joint Genome Institute"/>
            <person name="Copeland A."/>
            <person name="Lucas S."/>
            <person name="Lapidus A."/>
            <person name="Barry K."/>
            <person name="Detter J.C."/>
            <person name="Glavina del Rio T."/>
            <person name="Hammon N."/>
            <person name="Israni S."/>
            <person name="Dalin E."/>
            <person name="Tice H."/>
            <person name="Pitluck S."/>
            <person name="Chain P."/>
            <person name="Malfatti S."/>
            <person name="Shin M."/>
            <person name="Vergez L."/>
            <person name="Schmutz J."/>
            <person name="Larimer F."/>
            <person name="Land M."/>
            <person name="Hauser L."/>
            <person name="Richardson P."/>
        </authorList>
    </citation>
    <scope>NUCLEOTIDE SEQUENCE [LARGE SCALE GENOMIC DNA]</scope>
    <source>
        <strain>ATCC 25017 / CCUG 19701 / FSC 153 / O#319-036</strain>
    </source>
</reference>
<reference key="2">
    <citation type="journal article" date="2012" name="Proc. Natl. Acad. Sci. U.S.A.">
        <title>Homology models guide discovery of diverse enzyme specificities among dipeptide epimerases in the enolase superfamily.</title>
        <authorList>
            <person name="Lukk T."/>
            <person name="Sakai A."/>
            <person name="Kalyanaraman C."/>
            <person name="Brown S.D."/>
            <person name="Imker H.J."/>
            <person name="Song L."/>
            <person name="Fedorov A.A."/>
            <person name="Fedorov E.V."/>
            <person name="Toro R."/>
            <person name="Hillerich B."/>
            <person name="Seidel R."/>
            <person name="Patskovsky Y."/>
            <person name="Vetting M.W."/>
            <person name="Nair S.K."/>
            <person name="Babbitt P.C."/>
            <person name="Almo S.C."/>
            <person name="Gerlt J.A."/>
            <person name="Jacobson M.P."/>
        </authorList>
    </citation>
    <scope>X-RAY CRYSTALLOGRAPHY (1.90 ANGSTROMS) OF 2-356 IN COMPLEXES WITH DIPEPTIDE AND MAGNESIUM</scope>
    <scope>FUNCTION</scope>
    <scope>COFACTOR</scope>
    <source>
        <strain>ATCC 25017 / CCUG 19701 / FSC 153 / O#319-036</strain>
    </source>
</reference>
<protein>
    <recommendedName>
        <fullName>L-amino acid-D/L-Glu epimerase</fullName>
        <ecNumber>5.1.1.-</ecNumber>
    </recommendedName>
    <alternativeName>
        <fullName>L-Xxx-D/L-Glu epimerase</fullName>
    </alternativeName>
</protein>
<feature type="chain" id="PRO_0000429659" description="L-amino acid-D/L-Glu epimerase">
    <location>
        <begin position="1"/>
        <end position="356"/>
    </location>
</feature>
<feature type="binding site">
    <location>
        <position position="25"/>
    </location>
    <ligand>
        <name>substrate</name>
    </ligand>
</feature>
<feature type="binding site">
    <location>
        <position position="136"/>
    </location>
    <ligand>
        <name>substrate</name>
    </ligand>
</feature>
<feature type="binding site">
    <location>
        <begin position="161"/>
        <end position="163"/>
    </location>
    <ligand>
        <name>substrate</name>
    </ligand>
</feature>
<feature type="binding site">
    <location>
        <position position="191"/>
    </location>
    <ligand>
        <name>Mg(2+)</name>
        <dbReference type="ChEBI" id="CHEBI:18420"/>
    </ligand>
</feature>
<feature type="binding site">
    <location>
        <position position="193"/>
    </location>
    <ligand>
        <name>substrate</name>
    </ligand>
</feature>
<feature type="binding site">
    <location>
        <position position="219"/>
    </location>
    <ligand>
        <name>Mg(2+)</name>
        <dbReference type="ChEBI" id="CHEBI:18420"/>
    </ligand>
</feature>
<feature type="binding site">
    <location>
        <position position="244"/>
    </location>
    <ligand>
        <name>Mg(2+)</name>
        <dbReference type="ChEBI" id="CHEBI:18420"/>
    </ligand>
</feature>
<feature type="binding site">
    <location>
        <position position="268"/>
    </location>
    <ligand>
        <name>substrate</name>
    </ligand>
</feature>
<feature type="binding site">
    <location>
        <begin position="296"/>
        <end position="298"/>
    </location>
    <ligand>
        <name>substrate</name>
    </ligand>
</feature>
<feature type="binding site">
    <location>
        <begin position="320"/>
        <end position="322"/>
    </location>
    <ligand>
        <name>substrate</name>
    </ligand>
</feature>
<feature type="strand" evidence="3">
    <location>
        <begin position="3"/>
        <end position="21"/>
    </location>
</feature>
<feature type="strand" evidence="3">
    <location>
        <begin position="26"/>
        <end position="39"/>
    </location>
</feature>
<feature type="strand" evidence="3">
    <location>
        <begin position="44"/>
        <end position="50"/>
    </location>
</feature>
<feature type="helix" evidence="3">
    <location>
        <begin position="53"/>
        <end position="56"/>
    </location>
</feature>
<feature type="helix" evidence="3">
    <location>
        <begin position="60"/>
        <end position="69"/>
    </location>
</feature>
<feature type="helix" evidence="3">
    <location>
        <begin position="72"/>
        <end position="75"/>
    </location>
</feature>
<feature type="helix" evidence="3">
    <location>
        <begin position="80"/>
        <end position="82"/>
    </location>
</feature>
<feature type="helix" evidence="3">
    <location>
        <begin position="83"/>
        <end position="91"/>
    </location>
</feature>
<feature type="helix" evidence="3">
    <location>
        <begin position="98"/>
        <end position="115"/>
    </location>
</feature>
<feature type="helix" evidence="3">
    <location>
        <begin position="120"/>
        <end position="123"/>
    </location>
</feature>
<feature type="strand" evidence="3">
    <location>
        <begin position="130"/>
        <end position="133"/>
    </location>
</feature>
<feature type="strand" evidence="3">
    <location>
        <begin position="135"/>
        <end position="137"/>
    </location>
</feature>
<feature type="helix" evidence="3">
    <location>
        <begin position="142"/>
        <end position="154"/>
    </location>
</feature>
<feature type="strand" evidence="3">
    <location>
        <begin position="159"/>
        <end position="163"/>
    </location>
</feature>
<feature type="helix" evidence="3">
    <location>
        <begin position="168"/>
        <end position="181"/>
    </location>
</feature>
<feature type="strand" evidence="3">
    <location>
        <begin position="186"/>
        <end position="191"/>
    </location>
</feature>
<feature type="helix" evidence="3">
    <location>
        <begin position="198"/>
        <end position="209"/>
    </location>
</feature>
<feature type="strand" evidence="3">
    <location>
        <begin position="215"/>
        <end position="219"/>
    </location>
</feature>
<feature type="helix" evidence="3">
    <location>
        <begin position="227"/>
        <end position="236"/>
    </location>
</feature>
<feature type="strand" evidence="3">
    <location>
        <begin position="241"/>
        <end position="244"/>
    </location>
</feature>
<feature type="helix" evidence="3">
    <location>
        <begin position="250"/>
        <end position="258"/>
    </location>
</feature>
<feature type="strand" evidence="3">
    <location>
        <begin position="263"/>
        <end position="267"/>
    </location>
</feature>
<feature type="helix" evidence="3">
    <location>
        <begin position="269"/>
        <end position="272"/>
    </location>
</feature>
<feature type="helix" evidence="3">
    <location>
        <begin position="275"/>
        <end position="287"/>
    </location>
</feature>
<feature type="strand" evidence="3">
    <location>
        <begin position="291"/>
        <end position="294"/>
    </location>
</feature>
<feature type="helix" evidence="3">
    <location>
        <begin position="301"/>
        <end position="313"/>
    </location>
</feature>
<feature type="helix" evidence="3">
    <location>
        <begin position="322"/>
        <end position="326"/>
    </location>
</feature>
<feature type="helix" evidence="3">
    <location>
        <begin position="329"/>
        <end position="331"/>
    </location>
</feature>
<feature type="turn" evidence="3">
    <location>
        <begin position="332"/>
        <end position="335"/>
    </location>
</feature>
<feature type="strand" evidence="3">
    <location>
        <begin position="336"/>
        <end position="339"/>
    </location>
</feature>
<feature type="strand" evidence="3">
    <location>
        <begin position="342"/>
        <end position="345"/>
    </location>
</feature>